<evidence type="ECO:0000250" key="1"/>
<evidence type="ECO:0000250" key="2">
    <source>
        <dbReference type="UniProtKB" id="O95180"/>
    </source>
</evidence>
<evidence type="ECO:0000255" key="3"/>
<evidence type="ECO:0000256" key="4">
    <source>
        <dbReference type="SAM" id="MobiDB-lite"/>
    </source>
</evidence>
<evidence type="ECO:0000269" key="5">
    <source>
    </source>
</evidence>
<evidence type="ECO:0000305" key="6"/>
<protein>
    <recommendedName>
        <fullName>Voltage-dependent T-type calcium channel subunit alpha-1H</fullName>
    </recommendedName>
    <alternativeName>
        <fullName>Voltage-gated calcium channel subunit alpha Cav3.2</fullName>
    </alternativeName>
</protein>
<name>CAC1H_RAT</name>
<comment type="function">
    <text evidence="2 5 6">Voltage-sensitive calcium channel that gives rise to T-type calcium currents. T-type calcium channels belong to the 'low-voltage activated (LVA)' group. A particularity of this type of channel is an opening at quite negative potentials, and a voltage-dependent inactivation (PubMed:11073957). T-type channels serve pacemaking functions in both central neurons and cardiac nodal cells and support calcium signaling in secretory cells and vascular smooth muscle (Probable). They may also be involved in the modulation of firing patterns of neurons. In the adrenal zona glomerulosa, participates in the signaling pathway leading to aldosterone production in response to either AGT/angiotensin II, or hyperkalemia (By similarity).</text>
</comment>
<comment type="catalytic activity">
    <reaction evidence="5">
        <text>Ca(2+)(in) = Ca(2+)(out)</text>
        <dbReference type="Rhea" id="RHEA:29671"/>
        <dbReference type="ChEBI" id="CHEBI:29108"/>
    </reaction>
</comment>
<comment type="subunit">
    <text evidence="2">Interacts (via N-terminal cytoplasmic domain) with STAC.</text>
</comment>
<comment type="subcellular location">
    <subcellularLocation>
        <location evidence="5">Cell membrane</location>
        <topology evidence="2">Multi-pass membrane protein</topology>
    </subcellularLocation>
    <text evidence="2">Interaction with STAC increases expression at the cell membrane.</text>
</comment>
<comment type="tissue specificity">
    <text evidence="5">Expressed in brain.</text>
</comment>
<comment type="domain">
    <text>Each of the four internal repeats contains five hydrophobic transmembrane segments (S1, S2, S3, S5, S6) and one positively charged transmembrane segment (S4). S4 segments probably represent the voltage-sensor and are characterized by a series of positively charged amino acids at every third position.</text>
</comment>
<comment type="PTM">
    <text>In response to raising of intracellular calcium, the T-type channels are activated by CaM-kinase II.</text>
</comment>
<comment type="similarity">
    <text evidence="6">Belongs to the calcium channel alpha-1 subunit (TC 1.A.1.11) family. CACNA1H subfamily.</text>
</comment>
<accession>Q9EQ60</accession>
<organism>
    <name type="scientific">Rattus norvegicus</name>
    <name type="common">Rat</name>
    <dbReference type="NCBI Taxonomy" id="10116"/>
    <lineage>
        <taxon>Eukaryota</taxon>
        <taxon>Metazoa</taxon>
        <taxon>Chordata</taxon>
        <taxon>Craniata</taxon>
        <taxon>Vertebrata</taxon>
        <taxon>Euteleostomi</taxon>
        <taxon>Mammalia</taxon>
        <taxon>Eutheria</taxon>
        <taxon>Euarchontoglires</taxon>
        <taxon>Glires</taxon>
        <taxon>Rodentia</taxon>
        <taxon>Myomorpha</taxon>
        <taxon>Muroidea</taxon>
        <taxon>Muridae</taxon>
        <taxon>Murinae</taxon>
        <taxon>Rattus</taxon>
    </lineage>
</organism>
<sequence>MTEGTLAADEVRVPLGASPPAPAAPVRASPASPGAPGREEQGGSGSGVLAPESPGTECGADLGADEEQPVPYPALAATVFFCLGQTTRPRSWCLRLVCNPWFEHISMLVIMLNCVTLGMFRPCEDVECRSERCSILEAFDDFIFAFFAVEMVIKMVALGLFGQKCYLGDTWNRLDFFIVMAGMMEYSLDGHNVSLSAIRTVRVLRPLRAINRVPSMRILVTLLLDTLPMLGNVLLLCFFVFFIFGIVGVQLWAGLLRNRCFLDSAFVRNNNLTFLRPYYQTEEGEENPFICSSRRDNGMQKCSHIPSRRELRVQCTLGWEAYGQPQAEDGGAGRNACINWNQYYNVCRSGEFNPHNGAINFDNIGYAWIAIFQVITLEGWVDIMYYVMDAHSFYNFIYFILLIIMGSFFMINLCLVVIATQFSETKQRENQLMREQRARYLSNDSTLASFSEPGSCYEELLKYVGHIFRKVKRRSLRLYARWQSRWRKKVDPSSTVHGQGPGRRPRRAGRRTASVHHLVYHHHHHHHHHYHFSHGGPRRPSPEPGAGDNRLVRACAPPSPPSPGHGPPDSESVHSIYHADCHVEGPQERARVAHSIATAASLKLASGLGTMNYPTILPSGTVNSKGGTSSRPKGLRGAGAPGAAVHSPLSLGSPRPYEKIQDVVGEQGLGRASSHLSGLSVPCPLPSPQAGTLTCELKSCPYCASALEDPEFEFSGSESGDSDAHGVYEFTQDVRHGDCRDPVQQPHEVGTPGHSNERRRTPLRKASQPGGIGHLWASFSGKLRRIVDSKYFNRGIMAAILVNTLSMGVEYHEQPEELTNALEISNIVFTSMFALEMLLKLLACGPLGYIRNPYNIFDGIVVVISVWEIVGQANGGLSVLRTFRLLRVLKLVRFLPALRRQLVVLMRTMDNVATFCMLLMLFIFIFSILGMHLFGCKFSLKTDSGDTVPDRKNFDSLLWAIVTVFQILTQEDWNVVLYNGMASTSSWAALYFVALMTFGNYVLFNLLVAILVEGFQAEGDATRSDTDEDKTSTQLEGDFDKLRDLRATEMKMYSLAVTPNGHLEGRGSLPPPLITHTAATPMPTPKSSPNLDVAHALLDSRRSSSGSVDPQLGDQKSLASLRSSPCTPWGPNSAGSSRRSSWNSLGRAPSLKRRNQCGERESLLSGEGKGSTDDEAEDSRPSTGTHPGASPGPRATPLRRAESLDHRSTLDLCPPRPAALLPTKFHDCNGQMVALPSEFFLRIDSHKEDAAEFDDDIEDSCCFRLHKVLEPYAPQWCRSRESWALYLFPPQNRLRVSCQKVIAHKMFDHVVLVFIFLNCITIALERPDIDPGSTERAFLSVSNYIFTAIFVVEMMVKVVALGLLWGEHAYLQSSWNVLDGLLVLVSLVDIIVAMASAGGAKILGVLRVLRLLRTLRPLRVISRAPGLKLVVETLISSLRPIGNIVLICCAFFIIFGILGVQLFKGKFYYCEGTDTRNITTKAECHAAHYRWVRRKYNFDNLGQALMSLFVLSSKDGWVNIMYDGLDAVGIDQQPVQNHNPWMLLYFISFLLIVSFFVLNMFVGVVVENFHKCRQHQEAEEARRREEKRLRRLERRRRKAQRRPYYADYSHTRRSIHSLCTSHYLDLFITFIICLNVITMSMEHYNQPKSLDEALKYCNYVFTIVFVFEAALKLVAFGFRRFFKDRWNQLDLAIVLLSIMGIALEEIEMNAALPINPTIIRIMRVLRIARVLKLLKMATGMRALLDTVVQALPQVGNLGLLFMLLFFIYAALGVELFGRLECSEDNPCEGLSRHATFTNFGMAFLTLFRVSTGDNWNGIMKDTLRECTREDKHCLSYLPALSPVYFVTFMLVAQFVLVNVVVAVLMKHLEESNKEAREDAEMDAEIELEMAQGSTAQPPPTAQESQGTQPDTPNLLVVRKVSVSRMLSLPNDSYMFRPVAPAAAPHSHPLQEVEMETYTGPVTSAHSPPLEPRASFQVPSAASSPARVSDPLCALSPRGTPRSLSLSRILCRQEAMHSESLEGKVDDVGGDSIPDYTEPAENMSTSQASTGAPRSPPCSPRPASVRTRKHTFGQRCISSRPPTLGGDEAEAADPADEEVSHITSSAHPWPATEPHSPEASPTASPVKGTMGSGRDPRRFCSVDAQSFLDKPGRPDAQRWSSVELDNGESHLESGEVRGRASELEPALGSRRKKKMSPPCISIEPPTKDEGSSRPPAAEGGNTTLRRRTPSCEAALHRDCPEPTEGPGTGGDPVAKGERWGQASCRAEHLTVPNFAFEPLDMGGPGGDCFLDSDQSVTPEPRVSSLGAIVPLILETELSMPSGDCPEKEQGLYLTVPQTPLKKPGSTPATPAPDDSGDEPV</sequence>
<proteinExistence type="evidence at transcript level"/>
<gene>
    <name type="primary">Cacna1h</name>
</gene>
<reference key="1">
    <citation type="journal article" date="2001" name="J. Biol. Chem.">
        <title>Molecular and functional characterization of a family of rat brain T-type calcium channels.</title>
        <authorList>
            <person name="McRory J.E."/>
            <person name="Santi C.M."/>
            <person name="Hamming K.S.C."/>
            <person name="Mezeyova J."/>
            <person name="Sutton K.G."/>
            <person name="Baillie D.L."/>
            <person name="Stea A."/>
            <person name="Snutch T.P."/>
        </authorList>
    </citation>
    <scope>NUCLEOTIDE SEQUENCE [MRNA]</scope>
    <scope>FUNCTION</scope>
    <scope>SUBCELLULAR LOCATION</scope>
    <scope>TISSUE SPECIFICITY</scope>
    <scope>TRANSPORTER ACTIVITY</scope>
    <source>
        <tissue>Brain</tissue>
    </source>
</reference>
<reference key="2">
    <citation type="submission" date="2005-07" db="EMBL/GenBank/DDBJ databases">
        <authorList>
            <person name="Snutch T.P."/>
            <person name="McRory J.E."/>
            <person name="Hamming K.S.C."/>
        </authorList>
    </citation>
    <scope>SEQUENCE REVISION TO 105; 874; 877; 1409 AND 2321</scope>
</reference>
<keyword id="KW-0106">Calcium</keyword>
<keyword id="KW-0107">Calcium channel</keyword>
<keyword id="KW-0109">Calcium transport</keyword>
<keyword id="KW-1003">Cell membrane</keyword>
<keyword id="KW-0325">Glycoprotein</keyword>
<keyword id="KW-0407">Ion channel</keyword>
<keyword id="KW-0406">Ion transport</keyword>
<keyword id="KW-0472">Membrane</keyword>
<keyword id="KW-0479">Metal-binding</keyword>
<keyword id="KW-1185">Reference proteome</keyword>
<keyword id="KW-0677">Repeat</keyword>
<keyword id="KW-0812">Transmembrane</keyword>
<keyword id="KW-1133">Transmembrane helix</keyword>
<keyword id="KW-0813">Transport</keyword>
<keyword id="KW-0851">Voltage-gated channel</keyword>
<keyword id="KW-0862">Zinc</keyword>
<dbReference type="EMBL" id="AF290213">
    <property type="protein sequence ID" value="AAG35187.2"/>
    <property type="molecule type" value="mRNA"/>
</dbReference>
<dbReference type="RefSeq" id="NP_722521.1">
    <property type="nucleotide sequence ID" value="NM_153814.2"/>
</dbReference>
<dbReference type="SMR" id="Q9EQ60"/>
<dbReference type="FunCoup" id="Q9EQ60">
    <property type="interactions" value="385"/>
</dbReference>
<dbReference type="STRING" id="10116.ENSRNOP00000042239"/>
<dbReference type="BindingDB" id="Q9EQ60"/>
<dbReference type="ChEMBL" id="CHEMBL5134"/>
<dbReference type="DrugCentral" id="Q9EQ60"/>
<dbReference type="GuidetoPHARMACOLOGY" id="536"/>
<dbReference type="CarbonylDB" id="Q9EQ60"/>
<dbReference type="GlyCosmos" id="Q9EQ60">
    <property type="glycosylation" value="3 sites, No reported glycans"/>
</dbReference>
<dbReference type="GlyGen" id="Q9EQ60">
    <property type="glycosylation" value="7 sites"/>
</dbReference>
<dbReference type="PhosphoSitePlus" id="Q9EQ60"/>
<dbReference type="PaxDb" id="10116-ENSRNOP00000042239"/>
<dbReference type="GeneID" id="114862"/>
<dbReference type="KEGG" id="rno:114862"/>
<dbReference type="UCSC" id="RGD:68943">
    <property type="organism name" value="rat"/>
</dbReference>
<dbReference type="AGR" id="RGD:68943"/>
<dbReference type="CTD" id="8912"/>
<dbReference type="RGD" id="68943">
    <property type="gene designation" value="Cacna1h"/>
</dbReference>
<dbReference type="eggNOG" id="KOG2302">
    <property type="taxonomic scope" value="Eukaryota"/>
</dbReference>
<dbReference type="InParanoid" id="Q9EQ60"/>
<dbReference type="PhylomeDB" id="Q9EQ60"/>
<dbReference type="PRO" id="PR:Q9EQ60"/>
<dbReference type="Proteomes" id="UP000002494">
    <property type="component" value="Unplaced"/>
</dbReference>
<dbReference type="GO" id="GO:0005901">
    <property type="term" value="C:caveola"/>
    <property type="evidence" value="ECO:0000266"/>
    <property type="project" value="RGD"/>
</dbReference>
<dbReference type="GO" id="GO:0030425">
    <property type="term" value="C:dendrite"/>
    <property type="evidence" value="ECO:0000314"/>
    <property type="project" value="RGD"/>
</dbReference>
<dbReference type="GO" id="GO:0098978">
    <property type="term" value="C:glutamatergic synapse"/>
    <property type="evidence" value="ECO:0000266"/>
    <property type="project" value="RGD"/>
</dbReference>
<dbReference type="GO" id="GO:0016020">
    <property type="term" value="C:membrane"/>
    <property type="evidence" value="ECO:0000266"/>
    <property type="project" value="RGD"/>
</dbReference>
<dbReference type="GO" id="GO:0043005">
    <property type="term" value="C:neuron projection"/>
    <property type="evidence" value="ECO:0000318"/>
    <property type="project" value="GO_Central"/>
</dbReference>
<dbReference type="GO" id="GO:0043204">
    <property type="term" value="C:perikaryon"/>
    <property type="evidence" value="ECO:0000314"/>
    <property type="project" value="RGD"/>
</dbReference>
<dbReference type="GO" id="GO:0005886">
    <property type="term" value="C:plasma membrane"/>
    <property type="evidence" value="ECO:0000250"/>
    <property type="project" value="UniProtKB"/>
</dbReference>
<dbReference type="GO" id="GO:0045211">
    <property type="term" value="C:postsynaptic membrane"/>
    <property type="evidence" value="ECO:0000266"/>
    <property type="project" value="RGD"/>
</dbReference>
<dbReference type="GO" id="GO:0048787">
    <property type="term" value="C:presynaptic active zone membrane"/>
    <property type="evidence" value="ECO:0000266"/>
    <property type="project" value="RGD"/>
</dbReference>
<dbReference type="GO" id="GO:0042383">
    <property type="term" value="C:sarcolemma"/>
    <property type="evidence" value="ECO:0000266"/>
    <property type="project" value="RGD"/>
</dbReference>
<dbReference type="GO" id="GO:0005891">
    <property type="term" value="C:voltage-gated calcium channel complex"/>
    <property type="evidence" value="ECO:0000305"/>
    <property type="project" value="RGD"/>
</dbReference>
<dbReference type="GO" id="GO:0001518">
    <property type="term" value="C:voltage-gated sodium channel complex"/>
    <property type="evidence" value="ECO:0000318"/>
    <property type="project" value="GO_Central"/>
</dbReference>
<dbReference type="GO" id="GO:0008332">
    <property type="term" value="F:low voltage-gated calcium channel activity"/>
    <property type="evidence" value="ECO:0000314"/>
    <property type="project" value="RGD"/>
</dbReference>
<dbReference type="GO" id="GO:0046872">
    <property type="term" value="F:metal ion binding"/>
    <property type="evidence" value="ECO:0007669"/>
    <property type="project" value="UniProtKB-KW"/>
</dbReference>
<dbReference type="GO" id="GO:0097110">
    <property type="term" value="F:scaffold protein binding"/>
    <property type="evidence" value="ECO:0000266"/>
    <property type="project" value="RGD"/>
</dbReference>
<dbReference type="GO" id="GO:0005245">
    <property type="term" value="F:voltage-gated calcium channel activity"/>
    <property type="evidence" value="ECO:0000266"/>
    <property type="project" value="RGD"/>
</dbReference>
<dbReference type="GO" id="GO:0005244">
    <property type="term" value="F:voltage-gated monoatomic ion channel activity"/>
    <property type="evidence" value="ECO:0000266"/>
    <property type="project" value="RGD"/>
</dbReference>
<dbReference type="GO" id="GO:0005248">
    <property type="term" value="F:voltage-gated sodium channel activity"/>
    <property type="evidence" value="ECO:0000318"/>
    <property type="project" value="GO_Central"/>
</dbReference>
<dbReference type="GO" id="GO:0032342">
    <property type="term" value="P:aldosterone biosynthetic process"/>
    <property type="evidence" value="ECO:0000315"/>
    <property type="project" value="UniProtKB"/>
</dbReference>
<dbReference type="GO" id="GO:0070509">
    <property type="term" value="P:calcium ion import"/>
    <property type="evidence" value="ECO:0000314"/>
    <property type="project" value="RGD"/>
</dbReference>
<dbReference type="GO" id="GO:0006816">
    <property type="term" value="P:calcium ion transport"/>
    <property type="evidence" value="ECO:0000314"/>
    <property type="project" value="RGD"/>
</dbReference>
<dbReference type="GO" id="GO:0032870">
    <property type="term" value="P:cellular response to hormone stimulus"/>
    <property type="evidence" value="ECO:0000266"/>
    <property type="project" value="RGD"/>
</dbReference>
<dbReference type="GO" id="GO:0035865">
    <property type="term" value="P:cellular response to potassium ion"/>
    <property type="evidence" value="ECO:0000266"/>
    <property type="project" value="RGD"/>
</dbReference>
<dbReference type="GO" id="GO:0034651">
    <property type="term" value="P:cortisol biosynthetic process"/>
    <property type="evidence" value="ECO:0000315"/>
    <property type="project" value="UniProtKB"/>
</dbReference>
<dbReference type="GO" id="GO:0098662">
    <property type="term" value="P:inorganic cation transmembrane transport"/>
    <property type="evidence" value="ECO:0000266"/>
    <property type="project" value="RGD"/>
</dbReference>
<dbReference type="GO" id="GO:0086010">
    <property type="term" value="P:membrane depolarization during action potential"/>
    <property type="evidence" value="ECO:0000318"/>
    <property type="project" value="GO_Central"/>
</dbReference>
<dbReference type="GO" id="GO:2000344">
    <property type="term" value="P:positive regulation of acrosome reaction"/>
    <property type="evidence" value="ECO:0000266"/>
    <property type="project" value="RGD"/>
</dbReference>
<dbReference type="GO" id="GO:0045956">
    <property type="term" value="P:positive regulation of calcium ion-dependent exocytosis"/>
    <property type="evidence" value="ECO:0000318"/>
    <property type="project" value="GO_Central"/>
</dbReference>
<dbReference type="GO" id="GO:0106134">
    <property type="term" value="P:positive regulation of cardiac muscle cell contraction"/>
    <property type="evidence" value="ECO:0000315"/>
    <property type="project" value="RGD"/>
</dbReference>
<dbReference type="GO" id="GO:0042391">
    <property type="term" value="P:regulation of membrane potential"/>
    <property type="evidence" value="ECO:0000266"/>
    <property type="project" value="RGD"/>
</dbReference>
<dbReference type="FunFam" id="1.10.287.70:FF:000557">
    <property type="entry name" value="Voltage-dependent calcium channel type A subunit alpha-1-like Protein"/>
    <property type="match status" value="1"/>
</dbReference>
<dbReference type="FunFam" id="1.10.287.70:FF:000014">
    <property type="entry name" value="Voltage-dependent T-type calcium channel subunit alpha"/>
    <property type="match status" value="1"/>
</dbReference>
<dbReference type="FunFam" id="1.10.287.70:FF:000018">
    <property type="entry name" value="Voltage-dependent T-type calcium channel subunit alpha"/>
    <property type="match status" value="1"/>
</dbReference>
<dbReference type="FunFam" id="1.10.287.70:FF:000053">
    <property type="entry name" value="Voltage-dependent T-type calcium channel subunit alpha"/>
    <property type="match status" value="1"/>
</dbReference>
<dbReference type="FunFam" id="1.10.287.70:FF:000054">
    <property type="entry name" value="Voltage-dependent T-type calcium channel subunit alpha"/>
    <property type="match status" value="1"/>
</dbReference>
<dbReference type="FunFam" id="1.20.120.350:FF:000007">
    <property type="entry name" value="Voltage-dependent T-type calcium channel subunit alpha"/>
    <property type="match status" value="1"/>
</dbReference>
<dbReference type="FunFam" id="1.20.120.350:FF:000008">
    <property type="entry name" value="Voltage-dependent T-type calcium channel subunit alpha"/>
    <property type="match status" value="1"/>
</dbReference>
<dbReference type="FunFam" id="1.20.120.350:FF:000009">
    <property type="entry name" value="Voltage-dependent T-type calcium channel subunit alpha"/>
    <property type="match status" value="1"/>
</dbReference>
<dbReference type="FunFam" id="1.20.120.350:FF:000012">
    <property type="entry name" value="Voltage-dependent T-type calcium channel subunit alpha"/>
    <property type="match status" value="1"/>
</dbReference>
<dbReference type="Gene3D" id="1.10.287.70">
    <property type="match status" value="4"/>
</dbReference>
<dbReference type="Gene3D" id="1.20.120.350">
    <property type="entry name" value="Voltage-gated potassium channels. Chain C"/>
    <property type="match status" value="4"/>
</dbReference>
<dbReference type="InterPro" id="IPR005821">
    <property type="entry name" value="Ion_trans_dom"/>
</dbReference>
<dbReference type="InterPro" id="IPR050599">
    <property type="entry name" value="VDCC_alpha-1_subunit"/>
</dbReference>
<dbReference type="InterPro" id="IPR005445">
    <property type="entry name" value="VDCC_T_a1"/>
</dbReference>
<dbReference type="InterPro" id="IPR027359">
    <property type="entry name" value="Volt_channel_dom_sf"/>
</dbReference>
<dbReference type="PANTHER" id="PTHR45628">
    <property type="entry name" value="VOLTAGE-DEPENDENT CALCIUM CHANNEL TYPE A SUBUNIT ALPHA-1"/>
    <property type="match status" value="1"/>
</dbReference>
<dbReference type="PANTHER" id="PTHR45628:SF37">
    <property type="entry name" value="VOLTAGE-DEPENDENT T-TYPE CALCIUM CHANNEL SUBUNIT ALPHA-1H"/>
    <property type="match status" value="1"/>
</dbReference>
<dbReference type="Pfam" id="PF00520">
    <property type="entry name" value="Ion_trans"/>
    <property type="match status" value="4"/>
</dbReference>
<dbReference type="PRINTS" id="PR01629">
    <property type="entry name" value="TVDCCALPHA1"/>
</dbReference>
<dbReference type="SUPFAM" id="SSF81324">
    <property type="entry name" value="Voltage-gated potassium channels"/>
    <property type="match status" value="4"/>
</dbReference>
<feature type="chain" id="PRO_0000053956" description="Voltage-dependent T-type calcium channel subunit alpha-1H">
    <location>
        <begin position="1"/>
        <end position="2359"/>
    </location>
</feature>
<feature type="topological domain" description="Cytoplasmic" evidence="3">
    <location>
        <begin position="1"/>
        <end position="100"/>
    </location>
</feature>
<feature type="transmembrane region" description="Helical; Name=S1 of repeat I" evidence="3">
    <location>
        <begin position="101"/>
        <end position="119"/>
    </location>
</feature>
<feature type="topological domain" description="Extracellular" evidence="3">
    <location>
        <begin position="120"/>
        <end position="141"/>
    </location>
</feature>
<feature type="transmembrane region" description="Helical; Name=S2 of repeat I" evidence="3">
    <location>
        <begin position="142"/>
        <end position="160"/>
    </location>
</feature>
<feature type="topological domain" description="Cytoplasmic" evidence="3">
    <location>
        <begin position="161"/>
        <end position="169"/>
    </location>
</feature>
<feature type="transmembrane region" description="Helical; Name=S3 of repeat I" evidence="3">
    <location>
        <begin position="170"/>
        <end position="184"/>
    </location>
</feature>
<feature type="topological domain" description="Extracellular" evidence="3">
    <location>
        <begin position="185"/>
        <end position="193"/>
    </location>
</feature>
<feature type="transmembrane region" description="Helical; Name=S4 of repeat I" evidence="3">
    <location>
        <begin position="194"/>
        <end position="212"/>
    </location>
</feature>
<feature type="topological domain" description="Cytoplasmic" evidence="3">
    <location>
        <begin position="213"/>
        <end position="232"/>
    </location>
</feature>
<feature type="transmembrane region" description="Helical; Name=S5 of repeat I" evidence="3">
    <location>
        <begin position="233"/>
        <end position="253"/>
    </location>
</feature>
<feature type="topological domain" description="Extracellular" evidence="3">
    <location>
        <begin position="254"/>
        <end position="394"/>
    </location>
</feature>
<feature type="transmembrane region" description="Helical; Name=S6 of repeat I" evidence="3">
    <location>
        <begin position="395"/>
        <end position="419"/>
    </location>
</feature>
<feature type="topological domain" description="Cytoplasmic" evidence="3">
    <location>
        <begin position="420"/>
        <end position="790"/>
    </location>
</feature>
<feature type="transmembrane region" description="Helical; Name=S1 of repeat II" evidence="3">
    <location>
        <begin position="791"/>
        <end position="811"/>
    </location>
</feature>
<feature type="topological domain" description="Extracellular" evidence="3">
    <location>
        <begin position="812"/>
        <end position="824"/>
    </location>
</feature>
<feature type="transmembrane region" description="Helical; Name=S2 of repeat II" evidence="3">
    <location>
        <begin position="825"/>
        <end position="846"/>
    </location>
</feature>
<feature type="topological domain" description="Cytoplasmic" evidence="3">
    <location>
        <begin position="847"/>
        <end position="852"/>
    </location>
</feature>
<feature type="transmembrane region" description="Helical; Name=S3 of repeat II" evidence="3">
    <location>
        <begin position="853"/>
        <end position="871"/>
    </location>
</feature>
<feature type="topological domain" description="Extracellular" evidence="3">
    <location>
        <begin position="872"/>
        <end position="879"/>
    </location>
</feature>
<feature type="transmembrane region" description="Helical; Name=S4 of repeat II" evidence="3">
    <location>
        <begin position="880"/>
        <end position="903"/>
    </location>
</feature>
<feature type="topological domain" description="Cytoplasmic" evidence="3">
    <location>
        <begin position="904"/>
        <end position="914"/>
    </location>
</feature>
<feature type="transmembrane region" description="Helical; Name=S5 of repeat II" evidence="3">
    <location>
        <begin position="915"/>
        <end position="935"/>
    </location>
</feature>
<feature type="topological domain" description="Extracellular" evidence="3">
    <location>
        <begin position="936"/>
        <end position="987"/>
    </location>
</feature>
<feature type="transmembrane region" description="Helical; Name=S6 of repeat II" evidence="3">
    <location>
        <begin position="988"/>
        <end position="1012"/>
    </location>
</feature>
<feature type="topological domain" description="Cytoplasmic" evidence="3">
    <location>
        <begin position="1013"/>
        <end position="1301"/>
    </location>
</feature>
<feature type="transmembrane region" description="Helical; Name=S1 of repeat III" evidence="3">
    <location>
        <begin position="1302"/>
        <end position="1324"/>
    </location>
</feature>
<feature type="topological domain" description="Extracellular" evidence="3">
    <location>
        <begin position="1325"/>
        <end position="1342"/>
    </location>
</feature>
<feature type="transmembrane region" description="Helical; Name=S2 of repeat III" evidence="3">
    <location>
        <begin position="1343"/>
        <end position="1363"/>
    </location>
</feature>
<feature type="topological domain" description="Cytoplasmic" evidence="3">
    <location>
        <begin position="1364"/>
        <end position="1373"/>
    </location>
</feature>
<feature type="transmembrane region" description="Helical; Name=S3 of repeat III" evidence="3">
    <location>
        <begin position="1374"/>
        <end position="1393"/>
    </location>
</feature>
<feature type="topological domain" description="Extracellular" evidence="3">
    <location>
        <begin position="1394"/>
        <end position="1407"/>
    </location>
</feature>
<feature type="transmembrane region" description="Helical; Name=S4 of repeat III" evidence="3">
    <location>
        <begin position="1408"/>
        <end position="1429"/>
    </location>
</feature>
<feature type="topological domain" description="Cytoplasmic" evidence="3">
    <location>
        <begin position="1430"/>
        <end position="1439"/>
    </location>
</feature>
<feature type="transmembrane region" description="Helical; Name=S5 of repeat III" evidence="3">
    <location>
        <begin position="1440"/>
        <end position="1463"/>
    </location>
</feature>
<feature type="topological domain" description="Extracellular" evidence="3">
    <location>
        <begin position="1464"/>
        <end position="1540"/>
    </location>
</feature>
<feature type="transmembrane region" description="Helical; Name=S6 of repeat III" evidence="3">
    <location>
        <begin position="1541"/>
        <end position="1566"/>
    </location>
</feature>
<feature type="topological domain" description="Cytoplasmic" evidence="3">
    <location>
        <begin position="1567"/>
        <end position="1621"/>
    </location>
</feature>
<feature type="transmembrane region" description="Helical; Name=S1 of repeat IV" evidence="3">
    <location>
        <begin position="1622"/>
        <end position="1642"/>
    </location>
</feature>
<feature type="topological domain" description="Extracellular" evidence="3">
    <location>
        <begin position="1643"/>
        <end position="1656"/>
    </location>
</feature>
<feature type="transmembrane region" description="Helical; Name=S2 of repeat IV" evidence="3">
    <location>
        <begin position="1657"/>
        <end position="1678"/>
    </location>
</feature>
<feature type="topological domain" description="Cytoplasmic" evidence="3">
    <location>
        <begin position="1679"/>
        <end position="1685"/>
    </location>
</feature>
<feature type="transmembrane region" description="Helical; Name=S3 of repeat IV" evidence="3">
    <location>
        <begin position="1686"/>
        <end position="1704"/>
    </location>
</feature>
<feature type="topological domain" description="Extracellular" evidence="3">
    <location>
        <begin position="1705"/>
        <end position="1718"/>
    </location>
</feature>
<feature type="transmembrane region" description="Helical; Name=S4 of repeat IV" evidence="3">
    <location>
        <begin position="1719"/>
        <end position="1742"/>
    </location>
</feature>
<feature type="topological domain" description="Cytoplasmic" evidence="3">
    <location>
        <begin position="1743"/>
        <end position="1756"/>
    </location>
</feature>
<feature type="transmembrane region" description="Helical; Name=S5 of repeat IV" evidence="3">
    <location>
        <begin position="1757"/>
        <end position="1777"/>
    </location>
</feature>
<feature type="topological domain" description="Extracellular" evidence="3">
    <location>
        <begin position="1778"/>
        <end position="1840"/>
    </location>
</feature>
<feature type="transmembrane region" description="Helical; Name=S6 of repeat IV" evidence="3">
    <location>
        <begin position="1841"/>
        <end position="1868"/>
    </location>
</feature>
<feature type="topological domain" description="Cytoplasmic" evidence="3">
    <location>
        <begin position="1869"/>
        <end position="2359"/>
    </location>
</feature>
<feature type="repeat" description="I">
    <location>
        <begin position="87"/>
        <end position="422"/>
    </location>
</feature>
<feature type="repeat" description="II">
    <location>
        <begin position="776"/>
        <end position="1015"/>
    </location>
</feature>
<feature type="repeat" description="III">
    <location>
        <begin position="1292"/>
        <end position="1569"/>
    </location>
</feature>
<feature type="repeat" description="IV">
    <location>
        <begin position="1607"/>
        <end position="1868"/>
    </location>
</feature>
<feature type="region of interest" description="Disordered" evidence="4">
    <location>
        <begin position="1"/>
        <end position="63"/>
    </location>
</feature>
<feature type="region of interest" description="Disordered" evidence="4">
    <location>
        <begin position="490"/>
        <end position="573"/>
    </location>
</feature>
<feature type="region of interest" description="Disordered" evidence="4">
    <location>
        <begin position="620"/>
        <end position="656"/>
    </location>
</feature>
<feature type="region of interest" description="Disordered" evidence="4">
    <location>
        <begin position="737"/>
        <end position="769"/>
    </location>
</feature>
<feature type="region of interest" description="Disordered" evidence="4">
    <location>
        <begin position="1061"/>
        <end position="1197"/>
    </location>
</feature>
<feature type="region of interest" description="Disordered" evidence="4">
    <location>
        <begin position="1891"/>
        <end position="1913"/>
    </location>
</feature>
<feature type="region of interest" description="Disordered" evidence="4">
    <location>
        <begin position="1974"/>
        <end position="2003"/>
    </location>
</feature>
<feature type="region of interest" description="Disordered" evidence="4">
    <location>
        <begin position="2016"/>
        <end position="2258"/>
    </location>
</feature>
<feature type="region of interest" description="Disordered" evidence="4">
    <location>
        <begin position="2335"/>
        <end position="2359"/>
    </location>
</feature>
<feature type="compositionally biased region" description="Low complexity" evidence="4">
    <location>
        <begin position="24"/>
        <end position="36"/>
    </location>
</feature>
<feature type="compositionally biased region" description="Basic residues" evidence="4">
    <location>
        <begin position="503"/>
        <end position="532"/>
    </location>
</feature>
<feature type="compositionally biased region" description="Pro residues" evidence="4">
    <location>
        <begin position="557"/>
        <end position="566"/>
    </location>
</feature>
<feature type="compositionally biased region" description="Polar residues" evidence="4">
    <location>
        <begin position="620"/>
        <end position="631"/>
    </location>
</feature>
<feature type="compositionally biased region" description="Polar residues" evidence="4">
    <location>
        <begin position="1117"/>
        <end position="1126"/>
    </location>
</feature>
<feature type="compositionally biased region" description="Low complexity" evidence="4">
    <location>
        <begin position="1130"/>
        <end position="1147"/>
    </location>
</feature>
<feature type="compositionally biased region" description="Polar residues" evidence="4">
    <location>
        <begin position="1891"/>
        <end position="1911"/>
    </location>
</feature>
<feature type="compositionally biased region" description="Basic and acidic residues" evidence="4">
    <location>
        <begin position="2016"/>
        <end position="2026"/>
    </location>
</feature>
<feature type="compositionally biased region" description="Acidic residues" evidence="4">
    <location>
        <begin position="2086"/>
        <end position="2096"/>
    </location>
</feature>
<feature type="compositionally biased region" description="Basic and acidic residues" evidence="4">
    <location>
        <begin position="2166"/>
        <end position="2181"/>
    </location>
</feature>
<feature type="binding site" evidence="1">
    <location>
        <position position="140"/>
    </location>
    <ligand>
        <name>Zn(2+)</name>
        <dbReference type="ChEBI" id="CHEBI:29105"/>
    </ligand>
</feature>
<feature type="binding site" evidence="1">
    <location>
        <position position="189"/>
    </location>
    <ligand>
        <name>Zn(2+)</name>
        <dbReference type="ChEBI" id="CHEBI:29105"/>
    </ligand>
</feature>
<feature type="binding site" evidence="1">
    <location>
        <position position="191"/>
    </location>
    <ligand>
        <name>Zn(2+)</name>
        <dbReference type="ChEBI" id="CHEBI:29105"/>
    </ligand>
</feature>
<feature type="site" description="Calcium ion selectivity and permeability" evidence="1">
    <location>
        <position position="378"/>
    </location>
</feature>
<feature type="site" description="Calcium ion selectivity and permeability" evidence="1">
    <location>
        <position position="971"/>
    </location>
</feature>
<feature type="site" description="Calcium ion selectivity and permeability" evidence="1">
    <location>
        <position position="1515"/>
    </location>
</feature>
<feature type="site" description="Calcium ion selectivity and permeability" evidence="1">
    <location>
        <position position="1813"/>
    </location>
</feature>
<feature type="glycosylation site" description="N-linked (GlcNAc...) asparagine" evidence="3">
    <location>
        <position position="192"/>
    </location>
</feature>
<feature type="glycosylation site" description="N-linked (GlcNAc...) asparagine" evidence="3">
    <location>
        <position position="271"/>
    </location>
</feature>
<feature type="glycosylation site" description="N-linked (GlcNAc...) asparagine" evidence="3">
    <location>
        <position position="1477"/>
    </location>
</feature>